<reference key="1">
    <citation type="submission" date="2008-12" db="EMBL/GenBank/DDBJ databases">
        <title>Complete sequence of chromosome of Shewanella baltica OS223.</title>
        <authorList>
            <consortium name="US DOE Joint Genome Institute"/>
            <person name="Lucas S."/>
            <person name="Copeland A."/>
            <person name="Lapidus A."/>
            <person name="Glavina del Rio T."/>
            <person name="Dalin E."/>
            <person name="Tice H."/>
            <person name="Bruce D."/>
            <person name="Goodwin L."/>
            <person name="Pitluck S."/>
            <person name="Chertkov O."/>
            <person name="Meincke L."/>
            <person name="Brettin T."/>
            <person name="Detter J.C."/>
            <person name="Han C."/>
            <person name="Kuske C.R."/>
            <person name="Larimer F."/>
            <person name="Land M."/>
            <person name="Hauser L."/>
            <person name="Kyrpides N."/>
            <person name="Ovchinnikova G."/>
            <person name="Brettar I."/>
            <person name="Rodrigues J."/>
            <person name="Konstantinidis K."/>
            <person name="Tiedje J."/>
        </authorList>
    </citation>
    <scope>NUCLEOTIDE SEQUENCE [LARGE SCALE GENOMIC DNA]</scope>
    <source>
        <strain>OS223</strain>
    </source>
</reference>
<evidence type="ECO:0000255" key="1">
    <source>
        <dbReference type="HAMAP-Rule" id="MF_00514"/>
    </source>
</evidence>
<evidence type="ECO:0000305" key="2"/>
<keyword id="KW-0687">Ribonucleoprotein</keyword>
<keyword id="KW-0689">Ribosomal protein</keyword>
<comment type="similarity">
    <text evidence="1">Belongs to the bacterial ribosomal protein bL35 family.</text>
</comment>
<sequence length="64" mass="7383">MPKMKTDKGVAKRFKKTANGFKRKQAHLRHILTKKSTKRKRHLRAKCLVSKADVPAIARQLPYA</sequence>
<accession>B8EES8</accession>
<dbReference type="EMBL" id="CP001252">
    <property type="protein sequence ID" value="ACK46686.1"/>
    <property type="molecule type" value="Genomic_DNA"/>
</dbReference>
<dbReference type="RefSeq" id="WP_006081653.1">
    <property type="nucleotide sequence ID" value="NC_011663.1"/>
</dbReference>
<dbReference type="SMR" id="B8EES8"/>
<dbReference type="GeneID" id="11772455"/>
<dbReference type="KEGG" id="sbp:Sbal223_2186"/>
<dbReference type="HOGENOM" id="CLU_169643_1_1_6"/>
<dbReference type="Proteomes" id="UP000002507">
    <property type="component" value="Chromosome"/>
</dbReference>
<dbReference type="GO" id="GO:0022625">
    <property type="term" value="C:cytosolic large ribosomal subunit"/>
    <property type="evidence" value="ECO:0007669"/>
    <property type="project" value="TreeGrafter"/>
</dbReference>
<dbReference type="GO" id="GO:0003735">
    <property type="term" value="F:structural constituent of ribosome"/>
    <property type="evidence" value="ECO:0007669"/>
    <property type="project" value="InterPro"/>
</dbReference>
<dbReference type="GO" id="GO:0006412">
    <property type="term" value="P:translation"/>
    <property type="evidence" value="ECO:0007669"/>
    <property type="project" value="UniProtKB-UniRule"/>
</dbReference>
<dbReference type="FunFam" id="4.10.410.60:FF:000001">
    <property type="entry name" value="50S ribosomal protein L35"/>
    <property type="match status" value="1"/>
</dbReference>
<dbReference type="Gene3D" id="4.10.410.60">
    <property type="match status" value="1"/>
</dbReference>
<dbReference type="HAMAP" id="MF_00514">
    <property type="entry name" value="Ribosomal_bL35"/>
    <property type="match status" value="1"/>
</dbReference>
<dbReference type="InterPro" id="IPR001706">
    <property type="entry name" value="Ribosomal_bL35"/>
</dbReference>
<dbReference type="InterPro" id="IPR021137">
    <property type="entry name" value="Ribosomal_bL35-like"/>
</dbReference>
<dbReference type="InterPro" id="IPR018265">
    <property type="entry name" value="Ribosomal_bL35_CS"/>
</dbReference>
<dbReference type="InterPro" id="IPR037229">
    <property type="entry name" value="Ribosomal_bL35_sf"/>
</dbReference>
<dbReference type="NCBIfam" id="TIGR00001">
    <property type="entry name" value="rpmI_bact"/>
    <property type="match status" value="1"/>
</dbReference>
<dbReference type="PANTHER" id="PTHR33343">
    <property type="entry name" value="54S RIBOSOMAL PROTEIN BL35M"/>
    <property type="match status" value="1"/>
</dbReference>
<dbReference type="PANTHER" id="PTHR33343:SF1">
    <property type="entry name" value="LARGE RIBOSOMAL SUBUNIT PROTEIN BL35M"/>
    <property type="match status" value="1"/>
</dbReference>
<dbReference type="Pfam" id="PF01632">
    <property type="entry name" value="Ribosomal_L35p"/>
    <property type="match status" value="1"/>
</dbReference>
<dbReference type="PRINTS" id="PR00064">
    <property type="entry name" value="RIBOSOMALL35"/>
</dbReference>
<dbReference type="SUPFAM" id="SSF143034">
    <property type="entry name" value="L35p-like"/>
    <property type="match status" value="1"/>
</dbReference>
<dbReference type="PROSITE" id="PS00936">
    <property type="entry name" value="RIBOSOMAL_L35"/>
    <property type="match status" value="1"/>
</dbReference>
<feature type="chain" id="PRO_1000146157" description="Large ribosomal subunit protein bL35">
    <location>
        <begin position="1"/>
        <end position="64"/>
    </location>
</feature>
<gene>
    <name evidence="1" type="primary">rpmI</name>
    <name type="ordered locus">Sbal223_2186</name>
</gene>
<protein>
    <recommendedName>
        <fullName evidence="1">Large ribosomal subunit protein bL35</fullName>
    </recommendedName>
    <alternativeName>
        <fullName evidence="2">50S ribosomal protein L35</fullName>
    </alternativeName>
</protein>
<name>RL35_SHEB2</name>
<organism>
    <name type="scientific">Shewanella baltica (strain OS223)</name>
    <dbReference type="NCBI Taxonomy" id="407976"/>
    <lineage>
        <taxon>Bacteria</taxon>
        <taxon>Pseudomonadati</taxon>
        <taxon>Pseudomonadota</taxon>
        <taxon>Gammaproteobacteria</taxon>
        <taxon>Alteromonadales</taxon>
        <taxon>Shewanellaceae</taxon>
        <taxon>Shewanella</taxon>
    </lineage>
</organism>
<proteinExistence type="inferred from homology"/>